<keyword id="KW-0963">Cytoplasm</keyword>
<keyword id="KW-0227">DNA damage</keyword>
<keyword id="KW-0234">DNA repair</keyword>
<keyword id="KW-0255">Endonuclease</keyword>
<keyword id="KW-0378">Hydrolase</keyword>
<keyword id="KW-0540">Nuclease</keyword>
<reference key="1">
    <citation type="journal article" date="2008" name="J. Bacteriol.">
        <title>The pangenome structure of Escherichia coli: comparative genomic analysis of E. coli commensal and pathogenic isolates.</title>
        <authorList>
            <person name="Rasko D.A."/>
            <person name="Rosovitz M.J."/>
            <person name="Myers G.S.A."/>
            <person name="Mongodin E.F."/>
            <person name="Fricke W.F."/>
            <person name="Gajer P."/>
            <person name="Crabtree J."/>
            <person name="Sebaihia M."/>
            <person name="Thomson N.R."/>
            <person name="Chaudhuri R."/>
            <person name="Henderson I.R."/>
            <person name="Sperandio V."/>
            <person name="Ravel J."/>
        </authorList>
    </citation>
    <scope>NUCLEOTIDE SEQUENCE [LARGE SCALE GENOMIC DNA]</scope>
    <source>
        <strain>HS</strain>
    </source>
</reference>
<comment type="function">
    <text evidence="1">Sequence-specific endonuclease that cleaves unmethylated GATC sequences. It is involved in DNA mismatch repair.</text>
</comment>
<comment type="subcellular location">
    <subcellularLocation>
        <location evidence="1">Cytoplasm</location>
    </subcellularLocation>
</comment>
<comment type="similarity">
    <text evidence="1">Belongs to the MutH family.</text>
</comment>
<accession>A8A3W5</accession>
<name>MUTH_ECOHS</name>
<evidence type="ECO:0000255" key="1">
    <source>
        <dbReference type="HAMAP-Rule" id="MF_00759"/>
    </source>
</evidence>
<feature type="chain" id="PRO_1000062203" description="DNA mismatch repair protein MutH">
    <location>
        <begin position="1"/>
        <end position="229"/>
    </location>
</feature>
<gene>
    <name evidence="1" type="primary">mutH</name>
    <name type="ordered locus">EcHS_A2978</name>
</gene>
<sequence>MSQPRPLLSPPETEEQLLAQAQQLSGYTLGELAALVGLVTPENLKRDKGWIGVLLEIWLGASAGSKPEQDFAALGVELKTIPVDSLGRPLETTFVCVAPLTGNSGVTWETSHVRHKLKRVLWIPVEGERSIPLAQRRVGSPLLWSPNEEEDRQLREDWEELMDMIVLGQVERITARHGEYLQIRPKAANAKALTEAIGARGERILTLPRGFYLKKNFTSALLARHFLIQ</sequence>
<protein>
    <recommendedName>
        <fullName evidence="1">DNA mismatch repair protein MutH</fullName>
    </recommendedName>
    <alternativeName>
        <fullName evidence="1">Methyl-directed mismatch repair protein</fullName>
    </alternativeName>
</protein>
<proteinExistence type="inferred from homology"/>
<organism>
    <name type="scientific">Escherichia coli O9:H4 (strain HS)</name>
    <dbReference type="NCBI Taxonomy" id="331112"/>
    <lineage>
        <taxon>Bacteria</taxon>
        <taxon>Pseudomonadati</taxon>
        <taxon>Pseudomonadota</taxon>
        <taxon>Gammaproteobacteria</taxon>
        <taxon>Enterobacterales</taxon>
        <taxon>Enterobacteriaceae</taxon>
        <taxon>Escherichia</taxon>
    </lineage>
</organism>
<dbReference type="EMBL" id="CP000802">
    <property type="protein sequence ID" value="ABV07219.1"/>
    <property type="molecule type" value="Genomic_DNA"/>
</dbReference>
<dbReference type="RefSeq" id="WP_000082201.1">
    <property type="nucleotide sequence ID" value="NC_009800.1"/>
</dbReference>
<dbReference type="SMR" id="A8A3W5"/>
<dbReference type="KEGG" id="ecx:EcHS_A2978"/>
<dbReference type="HOGENOM" id="CLU_086669_0_0_6"/>
<dbReference type="GO" id="GO:0005737">
    <property type="term" value="C:cytoplasm"/>
    <property type="evidence" value="ECO:0007669"/>
    <property type="project" value="UniProtKB-SubCell"/>
</dbReference>
<dbReference type="GO" id="GO:0003677">
    <property type="term" value="F:DNA binding"/>
    <property type="evidence" value="ECO:0007669"/>
    <property type="project" value="InterPro"/>
</dbReference>
<dbReference type="GO" id="GO:0004519">
    <property type="term" value="F:endonuclease activity"/>
    <property type="evidence" value="ECO:0007669"/>
    <property type="project" value="UniProtKB-UniRule"/>
</dbReference>
<dbReference type="GO" id="GO:0006304">
    <property type="term" value="P:DNA modification"/>
    <property type="evidence" value="ECO:0007669"/>
    <property type="project" value="InterPro"/>
</dbReference>
<dbReference type="GO" id="GO:0006298">
    <property type="term" value="P:mismatch repair"/>
    <property type="evidence" value="ECO:0007669"/>
    <property type="project" value="UniProtKB-UniRule"/>
</dbReference>
<dbReference type="CDD" id="cd00583">
    <property type="entry name" value="MutH-like"/>
    <property type="match status" value="1"/>
</dbReference>
<dbReference type="FunFam" id="3.40.600.10:FF:000001">
    <property type="entry name" value="DNA mismatch repair protein MutH"/>
    <property type="match status" value="1"/>
</dbReference>
<dbReference type="Gene3D" id="3.40.600.10">
    <property type="entry name" value="DNA mismatch repair MutH/Restriction endonuclease, type II"/>
    <property type="match status" value="1"/>
</dbReference>
<dbReference type="HAMAP" id="MF_00759">
    <property type="entry name" value="MutH"/>
    <property type="match status" value="1"/>
</dbReference>
<dbReference type="InterPro" id="IPR004230">
    <property type="entry name" value="DNA_mismatch_repair_MutH"/>
</dbReference>
<dbReference type="InterPro" id="IPR011337">
    <property type="entry name" value="DNA_rep_MutH/RE_typeII_Sau3AI"/>
</dbReference>
<dbReference type="InterPro" id="IPR037057">
    <property type="entry name" value="DNA_rep_MutH/T2_RE_sf"/>
</dbReference>
<dbReference type="InterPro" id="IPR011335">
    <property type="entry name" value="Restrct_endonuc-II-like"/>
</dbReference>
<dbReference type="NCBIfam" id="TIGR02248">
    <property type="entry name" value="mutH_TIGR"/>
    <property type="match status" value="1"/>
</dbReference>
<dbReference type="NCBIfam" id="NF003458">
    <property type="entry name" value="PRK05070.1"/>
    <property type="match status" value="1"/>
</dbReference>
<dbReference type="Pfam" id="PF02976">
    <property type="entry name" value="MutH"/>
    <property type="match status" value="1"/>
</dbReference>
<dbReference type="SMART" id="SM00927">
    <property type="entry name" value="MutH"/>
    <property type="match status" value="1"/>
</dbReference>
<dbReference type="SUPFAM" id="SSF52980">
    <property type="entry name" value="Restriction endonuclease-like"/>
    <property type="match status" value="1"/>
</dbReference>